<evidence type="ECO:0000255" key="1">
    <source>
        <dbReference type="HAMAP-Rule" id="MF_00004"/>
    </source>
</evidence>
<gene>
    <name evidence="1" type="primary">apt</name>
    <name type="ordered locus">BCAH820_4488</name>
</gene>
<feature type="chain" id="PRO_1000116162" description="Adenine phosphoribosyltransferase">
    <location>
        <begin position="1"/>
        <end position="170"/>
    </location>
</feature>
<keyword id="KW-0963">Cytoplasm</keyword>
<keyword id="KW-0328">Glycosyltransferase</keyword>
<keyword id="KW-0660">Purine salvage</keyword>
<keyword id="KW-0808">Transferase</keyword>
<reference key="1">
    <citation type="submission" date="2008-10" db="EMBL/GenBank/DDBJ databases">
        <title>Genome sequence of Bacillus cereus AH820.</title>
        <authorList>
            <person name="Dodson R.J."/>
            <person name="Durkin A.S."/>
            <person name="Rosovitz M.J."/>
            <person name="Rasko D.A."/>
            <person name="Hoffmaster A."/>
            <person name="Ravel J."/>
            <person name="Sutton G."/>
        </authorList>
    </citation>
    <scope>NUCLEOTIDE SEQUENCE [LARGE SCALE GENOMIC DNA]</scope>
    <source>
        <strain>AH820</strain>
    </source>
</reference>
<sequence length="170" mass="18644">MDFKQHIAIVPDYPKEGIVFKDITPLMNDGKAYKAATDAIVEYAKERDIDLVVGPEARGFIIGCPVSYALEVGFAPVRKLGKLPREVITVDYGKEYGKDVLTIHKDAIKPGQRVLITDDLLATGGTIEATIKLVEELGGVVAGIAFLVELTYLDGRKMLDGYDVLVLEKY</sequence>
<name>APT_BACC0</name>
<dbReference type="EC" id="2.4.2.7" evidence="1"/>
<dbReference type="EMBL" id="CP001283">
    <property type="protein sequence ID" value="ACK91178.1"/>
    <property type="molecule type" value="Genomic_DNA"/>
</dbReference>
<dbReference type="RefSeq" id="WP_000346214.1">
    <property type="nucleotide sequence ID" value="NC_011773.1"/>
</dbReference>
<dbReference type="SMR" id="B7JPZ4"/>
<dbReference type="KEGG" id="bcu:BCAH820_4488"/>
<dbReference type="HOGENOM" id="CLU_063339_3_0_9"/>
<dbReference type="UniPathway" id="UPA00588">
    <property type="reaction ID" value="UER00646"/>
</dbReference>
<dbReference type="Proteomes" id="UP000001363">
    <property type="component" value="Chromosome"/>
</dbReference>
<dbReference type="GO" id="GO:0005737">
    <property type="term" value="C:cytoplasm"/>
    <property type="evidence" value="ECO:0007669"/>
    <property type="project" value="UniProtKB-SubCell"/>
</dbReference>
<dbReference type="GO" id="GO:0002055">
    <property type="term" value="F:adenine binding"/>
    <property type="evidence" value="ECO:0007669"/>
    <property type="project" value="TreeGrafter"/>
</dbReference>
<dbReference type="GO" id="GO:0003999">
    <property type="term" value="F:adenine phosphoribosyltransferase activity"/>
    <property type="evidence" value="ECO:0007669"/>
    <property type="project" value="UniProtKB-UniRule"/>
</dbReference>
<dbReference type="GO" id="GO:0016208">
    <property type="term" value="F:AMP binding"/>
    <property type="evidence" value="ECO:0007669"/>
    <property type="project" value="TreeGrafter"/>
</dbReference>
<dbReference type="GO" id="GO:0006168">
    <property type="term" value="P:adenine salvage"/>
    <property type="evidence" value="ECO:0007669"/>
    <property type="project" value="InterPro"/>
</dbReference>
<dbReference type="GO" id="GO:0044209">
    <property type="term" value="P:AMP salvage"/>
    <property type="evidence" value="ECO:0007669"/>
    <property type="project" value="UniProtKB-UniRule"/>
</dbReference>
<dbReference type="GO" id="GO:0006166">
    <property type="term" value="P:purine ribonucleoside salvage"/>
    <property type="evidence" value="ECO:0007669"/>
    <property type="project" value="UniProtKB-KW"/>
</dbReference>
<dbReference type="CDD" id="cd06223">
    <property type="entry name" value="PRTases_typeI"/>
    <property type="match status" value="1"/>
</dbReference>
<dbReference type="FunFam" id="3.40.50.2020:FF:000004">
    <property type="entry name" value="Adenine phosphoribosyltransferase"/>
    <property type="match status" value="1"/>
</dbReference>
<dbReference type="Gene3D" id="3.40.50.2020">
    <property type="match status" value="1"/>
</dbReference>
<dbReference type="HAMAP" id="MF_00004">
    <property type="entry name" value="Aden_phosphoribosyltr"/>
    <property type="match status" value="1"/>
</dbReference>
<dbReference type="InterPro" id="IPR005764">
    <property type="entry name" value="Ade_phspho_trans"/>
</dbReference>
<dbReference type="InterPro" id="IPR000836">
    <property type="entry name" value="PRibTrfase_dom"/>
</dbReference>
<dbReference type="InterPro" id="IPR029057">
    <property type="entry name" value="PRTase-like"/>
</dbReference>
<dbReference type="InterPro" id="IPR050054">
    <property type="entry name" value="UPRTase/APRTase"/>
</dbReference>
<dbReference type="NCBIfam" id="TIGR01090">
    <property type="entry name" value="apt"/>
    <property type="match status" value="1"/>
</dbReference>
<dbReference type="NCBIfam" id="NF002633">
    <property type="entry name" value="PRK02304.1-2"/>
    <property type="match status" value="1"/>
</dbReference>
<dbReference type="NCBIfam" id="NF002634">
    <property type="entry name" value="PRK02304.1-3"/>
    <property type="match status" value="1"/>
</dbReference>
<dbReference type="NCBIfam" id="NF002636">
    <property type="entry name" value="PRK02304.1-5"/>
    <property type="match status" value="1"/>
</dbReference>
<dbReference type="PANTHER" id="PTHR32315">
    <property type="entry name" value="ADENINE PHOSPHORIBOSYLTRANSFERASE"/>
    <property type="match status" value="1"/>
</dbReference>
<dbReference type="PANTHER" id="PTHR32315:SF3">
    <property type="entry name" value="ADENINE PHOSPHORIBOSYLTRANSFERASE"/>
    <property type="match status" value="1"/>
</dbReference>
<dbReference type="Pfam" id="PF00156">
    <property type="entry name" value="Pribosyltran"/>
    <property type="match status" value="1"/>
</dbReference>
<dbReference type="SUPFAM" id="SSF53271">
    <property type="entry name" value="PRTase-like"/>
    <property type="match status" value="1"/>
</dbReference>
<accession>B7JPZ4</accession>
<comment type="function">
    <text evidence="1">Catalyzes a salvage reaction resulting in the formation of AMP, that is energically less costly than de novo synthesis.</text>
</comment>
<comment type="catalytic activity">
    <reaction evidence="1">
        <text>AMP + diphosphate = 5-phospho-alpha-D-ribose 1-diphosphate + adenine</text>
        <dbReference type="Rhea" id="RHEA:16609"/>
        <dbReference type="ChEBI" id="CHEBI:16708"/>
        <dbReference type="ChEBI" id="CHEBI:33019"/>
        <dbReference type="ChEBI" id="CHEBI:58017"/>
        <dbReference type="ChEBI" id="CHEBI:456215"/>
        <dbReference type="EC" id="2.4.2.7"/>
    </reaction>
</comment>
<comment type="pathway">
    <text evidence="1">Purine metabolism; AMP biosynthesis via salvage pathway; AMP from adenine: step 1/1.</text>
</comment>
<comment type="subunit">
    <text evidence="1">Homodimer.</text>
</comment>
<comment type="subcellular location">
    <subcellularLocation>
        <location evidence="1">Cytoplasm</location>
    </subcellularLocation>
</comment>
<comment type="similarity">
    <text evidence="1">Belongs to the purine/pyrimidine phosphoribosyltransferase family.</text>
</comment>
<organism>
    <name type="scientific">Bacillus cereus (strain AH820)</name>
    <dbReference type="NCBI Taxonomy" id="405535"/>
    <lineage>
        <taxon>Bacteria</taxon>
        <taxon>Bacillati</taxon>
        <taxon>Bacillota</taxon>
        <taxon>Bacilli</taxon>
        <taxon>Bacillales</taxon>
        <taxon>Bacillaceae</taxon>
        <taxon>Bacillus</taxon>
        <taxon>Bacillus cereus group</taxon>
    </lineage>
</organism>
<proteinExistence type="inferred from homology"/>
<protein>
    <recommendedName>
        <fullName evidence="1">Adenine phosphoribosyltransferase</fullName>
        <shortName evidence="1">APRT</shortName>
        <ecNumber evidence="1">2.4.2.7</ecNumber>
    </recommendedName>
</protein>